<keyword id="KW-0002">3D-structure</keyword>
<keyword id="KW-0025">Alternative splicing</keyword>
<keyword id="KW-1003">Cell membrane</keyword>
<keyword id="KW-0165">Cleavage on pair of basic residues</keyword>
<keyword id="KW-0903">Direct protein sequencing</keyword>
<keyword id="KW-1015">Disulfide bond</keyword>
<keyword id="KW-0325">Glycoprotein</keyword>
<keyword id="KW-0378">Hydrolase</keyword>
<keyword id="KW-0472">Membrane</keyword>
<keyword id="KW-0479">Metal-binding</keyword>
<keyword id="KW-0482">Metalloprotease</keyword>
<keyword id="KW-0914">Notch signaling pathway</keyword>
<keyword id="KW-0597">Phosphoprotein</keyword>
<keyword id="KW-0645">Protease</keyword>
<keyword id="KW-1267">Proteomics identification</keyword>
<keyword id="KW-1185">Reference proteome</keyword>
<keyword id="KW-0729">SH3-binding</keyword>
<keyword id="KW-0732">Signal</keyword>
<keyword id="KW-0812">Transmembrane</keyword>
<keyword id="KW-1133">Transmembrane helix</keyword>
<keyword id="KW-0862">Zinc</keyword>
<keyword id="KW-0865">Zymogen</keyword>
<dbReference type="EC" id="3.4.24.86" evidence="10 13 16 20"/>
<dbReference type="EMBL" id="U86755">
    <property type="protein sequence ID" value="AAB51586.1"/>
    <property type="molecule type" value="mRNA"/>
</dbReference>
<dbReference type="EMBL" id="U69611">
    <property type="protein sequence ID" value="AAB51514.1"/>
    <property type="molecule type" value="mRNA"/>
</dbReference>
<dbReference type="EMBL" id="U69612">
    <property type="protein sequence ID" value="AAB53014.1"/>
    <property type="molecule type" value="mRNA"/>
</dbReference>
<dbReference type="EMBL" id="U92649">
    <property type="protein sequence ID" value="AAC39721.1"/>
    <property type="molecule type" value="mRNA"/>
</dbReference>
<dbReference type="CCDS" id="CCDS1665.1">
    <molecule id="P78536-1"/>
</dbReference>
<dbReference type="RefSeq" id="NP_003174.3">
    <molecule id="P78536-1"/>
    <property type="nucleotide sequence ID" value="NM_003183.5"/>
</dbReference>
<dbReference type="PDB" id="1BKC">
    <property type="method" value="X-ray"/>
    <property type="resolution" value="2.00 A"/>
    <property type="chains" value="A/C/E/I=219-474"/>
</dbReference>
<dbReference type="PDB" id="1ZXC">
    <property type="method" value="X-ray"/>
    <property type="resolution" value="2.28 A"/>
    <property type="chains" value="A/B=215-477"/>
</dbReference>
<dbReference type="PDB" id="2A8H">
    <property type="method" value="X-ray"/>
    <property type="resolution" value="2.30 A"/>
    <property type="chains" value="A/B=215-477"/>
</dbReference>
<dbReference type="PDB" id="2DDF">
    <property type="method" value="X-ray"/>
    <property type="resolution" value="1.70 A"/>
    <property type="chains" value="A/B=218-474"/>
</dbReference>
<dbReference type="PDB" id="2FV5">
    <property type="method" value="X-ray"/>
    <property type="resolution" value="2.10 A"/>
    <property type="chains" value="A/B=216-475"/>
</dbReference>
<dbReference type="PDB" id="2FV9">
    <property type="method" value="X-ray"/>
    <property type="resolution" value="2.02 A"/>
    <property type="chains" value="A/B=218-475"/>
</dbReference>
<dbReference type="PDB" id="2I47">
    <property type="method" value="X-ray"/>
    <property type="resolution" value="1.90 A"/>
    <property type="chains" value="A/B/C/D=212-492"/>
</dbReference>
<dbReference type="PDB" id="2M2F">
    <property type="method" value="NMR"/>
    <property type="chains" value="A=581-642"/>
</dbReference>
<dbReference type="PDB" id="2OI0">
    <property type="method" value="X-ray"/>
    <property type="resolution" value="2.00 A"/>
    <property type="chains" value="A=216-477"/>
</dbReference>
<dbReference type="PDB" id="3B92">
    <property type="method" value="X-ray"/>
    <property type="resolution" value="2.00 A"/>
    <property type="chains" value="A=216-474"/>
</dbReference>
<dbReference type="PDB" id="3CKI">
    <property type="method" value="X-ray"/>
    <property type="resolution" value="2.30 A"/>
    <property type="chains" value="A=219-474"/>
</dbReference>
<dbReference type="PDB" id="3E8R">
    <property type="method" value="X-ray"/>
    <property type="resolution" value="1.90 A"/>
    <property type="chains" value="A/B=215-477"/>
</dbReference>
<dbReference type="PDB" id="3EDZ">
    <property type="method" value="X-ray"/>
    <property type="resolution" value="1.90 A"/>
    <property type="chains" value="A/B=215-477"/>
</dbReference>
<dbReference type="PDB" id="3EWJ">
    <property type="method" value="X-ray"/>
    <property type="resolution" value="1.80 A"/>
    <property type="chains" value="A/B=215-477"/>
</dbReference>
<dbReference type="PDB" id="3G42">
    <property type="method" value="X-ray"/>
    <property type="resolution" value="2.10 A"/>
    <property type="chains" value="A/B/C/D=212-492"/>
</dbReference>
<dbReference type="PDB" id="3KMC">
    <property type="method" value="X-ray"/>
    <property type="resolution" value="1.80 A"/>
    <property type="chains" value="A/B=215-476"/>
</dbReference>
<dbReference type="PDB" id="3KME">
    <property type="method" value="X-ray"/>
    <property type="resolution" value="1.85 A"/>
    <property type="chains" value="A/B=215-476"/>
</dbReference>
<dbReference type="PDB" id="3L0T">
    <property type="method" value="X-ray"/>
    <property type="resolution" value="1.92 A"/>
    <property type="chains" value="A/B=215-476"/>
</dbReference>
<dbReference type="PDB" id="3L0V">
    <property type="method" value="X-ray"/>
    <property type="resolution" value="1.75 A"/>
    <property type="chains" value="A/B=215-476"/>
</dbReference>
<dbReference type="PDB" id="3LE9">
    <property type="method" value="X-ray"/>
    <property type="resolution" value="1.85 A"/>
    <property type="chains" value="A/B=215-476"/>
</dbReference>
<dbReference type="PDB" id="3LEA">
    <property type="method" value="X-ray"/>
    <property type="resolution" value="2.00 A"/>
    <property type="chains" value="A/B=215-476"/>
</dbReference>
<dbReference type="PDB" id="3LGP">
    <property type="method" value="X-ray"/>
    <property type="resolution" value="1.90 A"/>
    <property type="chains" value="A/B=215-476"/>
</dbReference>
<dbReference type="PDB" id="3O64">
    <property type="method" value="X-ray"/>
    <property type="resolution" value="1.88 A"/>
    <property type="chains" value="A/B=215-476"/>
</dbReference>
<dbReference type="PDB" id="8CQY">
    <property type="method" value="X-ray"/>
    <property type="resolution" value="1.70 A"/>
    <property type="chains" value="B=813-824"/>
</dbReference>
<dbReference type="PDB" id="8SNL">
    <property type="method" value="EM"/>
    <property type="resolution" value="2.78 A"/>
    <property type="chains" value="A=1-824"/>
</dbReference>
<dbReference type="PDB" id="8SNN">
    <property type="method" value="EM"/>
    <property type="resolution" value="2.32 A"/>
    <property type="chains" value="A=215-824"/>
</dbReference>
<dbReference type="PDB" id="8SNO">
    <property type="method" value="EM"/>
    <property type="resolution" value="2.78 A"/>
    <property type="chains" value="A=215-824"/>
</dbReference>
<dbReference type="PDB" id="9E6K">
    <property type="method" value="EM"/>
    <property type="resolution" value="3.15 A"/>
    <property type="chains" value="C=530-644"/>
</dbReference>
<dbReference type="PDBsum" id="1BKC"/>
<dbReference type="PDBsum" id="1ZXC"/>
<dbReference type="PDBsum" id="2A8H"/>
<dbReference type="PDBsum" id="2DDF"/>
<dbReference type="PDBsum" id="2FV5"/>
<dbReference type="PDBsum" id="2FV9"/>
<dbReference type="PDBsum" id="2I47"/>
<dbReference type="PDBsum" id="2M2F"/>
<dbReference type="PDBsum" id="2OI0"/>
<dbReference type="PDBsum" id="3B92"/>
<dbReference type="PDBsum" id="3CKI"/>
<dbReference type="PDBsum" id="3E8R"/>
<dbReference type="PDBsum" id="3EDZ"/>
<dbReference type="PDBsum" id="3EWJ"/>
<dbReference type="PDBsum" id="3G42"/>
<dbReference type="PDBsum" id="3KMC"/>
<dbReference type="PDBsum" id="3KME"/>
<dbReference type="PDBsum" id="3L0T"/>
<dbReference type="PDBsum" id="3L0V"/>
<dbReference type="PDBsum" id="3LE9"/>
<dbReference type="PDBsum" id="3LEA"/>
<dbReference type="PDBsum" id="3LGP"/>
<dbReference type="PDBsum" id="3O64"/>
<dbReference type="PDBsum" id="8CQY"/>
<dbReference type="PDBsum" id="8SNL"/>
<dbReference type="PDBsum" id="8SNN"/>
<dbReference type="PDBsum" id="8SNO"/>
<dbReference type="PDBsum" id="9E6K"/>
<dbReference type="BMRB" id="P78536"/>
<dbReference type="EMDB" id="EMD-40628"/>
<dbReference type="EMDB" id="EMD-40629"/>
<dbReference type="EMDB" id="EMD-40630"/>
<dbReference type="EMDB" id="EMD-40631"/>
<dbReference type="EMDB" id="EMD-47571"/>
<dbReference type="SMR" id="P78536"/>
<dbReference type="BioGRID" id="112731">
    <property type="interactions" value="80"/>
</dbReference>
<dbReference type="CORUM" id="P78536"/>
<dbReference type="DIP" id="DIP-31044N"/>
<dbReference type="FunCoup" id="P78536">
    <property type="interactions" value="1854"/>
</dbReference>
<dbReference type="IntAct" id="P78536">
    <property type="interactions" value="50"/>
</dbReference>
<dbReference type="MINT" id="P78536"/>
<dbReference type="STRING" id="9606.ENSP00000309968"/>
<dbReference type="BindingDB" id="P78536"/>
<dbReference type="ChEMBL" id="CHEMBL3706"/>
<dbReference type="DrugBank" id="DB07189">
    <property type="generic name" value="(1S,3R,6S)-4-oxo-6-{4-[(2-phenylquinolin-4-yl)methoxy]phenyl}-5-azaspiro[2.4]heptane-1-carboxylic acid"/>
</dbReference>
<dbReference type="DrugBank" id="DB07145">
    <property type="generic name" value="(2R)-N-HYDROXY-2-[(3S)-3-METHYL-3-{4-[(2-METHYLQUINOLIN-4-YL)METHOXY]PHENYL}-2-OXOPYRROLIDIN-1-YL]PROPANAMIDE"/>
</dbReference>
<dbReference type="DrugBank" id="DB06943">
    <property type="generic name" value="(3S)-1-{[4-(but-2-yn-1-yloxy)phenyl]sulfonyl}pyrrolidine-3-thiol"/>
</dbReference>
<dbReference type="DrugBank" id="DB07964">
    <property type="generic name" value="(3S)-4-{[4-(BUT-2-YNYLOXY)PHENYL]SULFONYL}-N-HYDROXY-2,2-DIMETHYLTHIOMORPHOLINE-3-CARBOXAMIDE"/>
</dbReference>
<dbReference type="DrugBank" id="DB07079">
    <property type="generic name" value="3-{[4-(but-2-yn-1-yloxy)phenyl]sulfonyl}propane-1-thiol"/>
</dbReference>
<dbReference type="DrugBank" id="DB07121">
    <property type="generic name" value="4-({4-[(4-AMINOBUT-2-YNYL)OXY]PHENYL}SULFONYL)-N-HYDROXY-2,2-DIMETHYLTHIOMORPHOLINE-3-CARBOXAMIDE"/>
</dbReference>
<dbReference type="DrugBank" id="DB13020">
    <property type="generic name" value="Apratastat"/>
</dbReference>
<dbReference type="DrugBank" id="DB07147">
    <property type="generic name" value="methyl (1R,2S)-2-(hydroxycarbamoyl)-1-{4-[(2-methylquinolin-4-yl)methoxy]benzyl}cyclopropanecarboxylate"/>
</dbReference>
<dbReference type="DrugBank" id="DB07233">
    <property type="generic name" value="N-{[4-(but-2-yn-1-yloxy)phenyl]sulfonyl}-5-methyl-D-tryptophan"/>
</dbReference>
<dbReference type="DrugCentral" id="P78536"/>
<dbReference type="GuidetoPHARMACOLOGY" id="1662"/>
<dbReference type="MEROPS" id="M12.217"/>
<dbReference type="TCDB" id="8.A.77.1.2">
    <property type="family name" value="the sheddase (sheddase) family"/>
</dbReference>
<dbReference type="GlyConnect" id="1180">
    <property type="glycosylation" value="18 N-Linked glycans (5 sites)"/>
</dbReference>
<dbReference type="GlyCosmos" id="P78536">
    <property type="glycosylation" value="9 sites, 20 glycans"/>
</dbReference>
<dbReference type="GlyGen" id="P78536">
    <property type="glycosylation" value="13 sites, 57 N-linked glycans (9 sites), 1 O-linked glycan (3 sites)"/>
</dbReference>
<dbReference type="iPTMnet" id="P78536"/>
<dbReference type="PhosphoSitePlus" id="P78536"/>
<dbReference type="SwissPalm" id="P78536"/>
<dbReference type="BioMuta" id="ADAM17"/>
<dbReference type="DMDM" id="14423632"/>
<dbReference type="CPTAC" id="CPTAC-1561"/>
<dbReference type="CPTAC" id="CPTAC-5968"/>
<dbReference type="jPOST" id="P78536"/>
<dbReference type="MassIVE" id="P78536"/>
<dbReference type="PaxDb" id="9606-ENSP00000309968"/>
<dbReference type="PeptideAtlas" id="P78536"/>
<dbReference type="ProteomicsDB" id="57637">
    <molecule id="P78536-1"/>
</dbReference>
<dbReference type="ProteomicsDB" id="57638">
    <molecule id="P78536-2"/>
</dbReference>
<dbReference type="Pumba" id="P78536"/>
<dbReference type="ABCD" id="P78536">
    <property type="antibodies" value="34 sequenced antibodies"/>
</dbReference>
<dbReference type="Antibodypedia" id="2540">
    <property type="antibodies" value="951 antibodies from 48 providers"/>
</dbReference>
<dbReference type="DNASU" id="6868"/>
<dbReference type="Ensembl" id="ENST00000310823.8">
    <molecule id="P78536-1"/>
    <property type="protein sequence ID" value="ENSP00000309968.3"/>
    <property type="gene ID" value="ENSG00000151694.15"/>
</dbReference>
<dbReference type="GeneID" id="6868"/>
<dbReference type="KEGG" id="hsa:6868"/>
<dbReference type="MANE-Select" id="ENST00000310823.8">
    <property type="protein sequence ID" value="ENSP00000309968.3"/>
    <property type="RefSeq nucleotide sequence ID" value="NM_003183.6"/>
    <property type="RefSeq protein sequence ID" value="NP_003174.3"/>
</dbReference>
<dbReference type="UCSC" id="uc002qzu.5">
    <molecule id="P78536-1"/>
    <property type="organism name" value="human"/>
</dbReference>
<dbReference type="AGR" id="HGNC:195"/>
<dbReference type="CTD" id="6868"/>
<dbReference type="DisGeNET" id="6868"/>
<dbReference type="GeneCards" id="ADAM17"/>
<dbReference type="HGNC" id="HGNC:195">
    <property type="gene designation" value="ADAM17"/>
</dbReference>
<dbReference type="HPA" id="ENSG00000151694">
    <property type="expression patterns" value="Low tissue specificity"/>
</dbReference>
<dbReference type="MalaCards" id="ADAM17"/>
<dbReference type="MIM" id="603639">
    <property type="type" value="gene"/>
</dbReference>
<dbReference type="MIM" id="614328">
    <property type="type" value="phenotype"/>
</dbReference>
<dbReference type="neXtProt" id="NX_P78536"/>
<dbReference type="NIAGADS" id="ENSG00000151694"/>
<dbReference type="OpenTargets" id="ENSG00000151694"/>
<dbReference type="Orphanet" id="294023">
    <property type="disease" value="Neonatal inflammatory skin and bowel disease"/>
</dbReference>
<dbReference type="PharmGKB" id="PA24512"/>
<dbReference type="VEuPathDB" id="HostDB:ENSG00000151694"/>
<dbReference type="eggNOG" id="KOG3658">
    <property type="taxonomic scope" value="Eukaryota"/>
</dbReference>
<dbReference type="GeneTree" id="ENSGT00940000155443"/>
<dbReference type="HOGENOM" id="CLU_004602_2_0_1"/>
<dbReference type="InParanoid" id="P78536"/>
<dbReference type="OMA" id="EHDPDIT"/>
<dbReference type="OrthoDB" id="2131567at2759"/>
<dbReference type="PAN-GO" id="P78536">
    <property type="GO annotations" value="4 GO annotations based on evolutionary models"/>
</dbReference>
<dbReference type="PhylomeDB" id="P78536"/>
<dbReference type="TreeFam" id="TF314733"/>
<dbReference type="BRENDA" id="3.4.24.86">
    <property type="organism ID" value="2681"/>
</dbReference>
<dbReference type="PathwayCommons" id="P78536"/>
<dbReference type="Reactome" id="R-HSA-1251985">
    <property type="pathway name" value="Nuclear signaling by ERBB4"/>
</dbReference>
<dbReference type="Reactome" id="R-HSA-1442490">
    <property type="pathway name" value="Collagen degradation"/>
</dbReference>
<dbReference type="Reactome" id="R-HSA-177929">
    <property type="pathway name" value="Signaling by EGFR"/>
</dbReference>
<dbReference type="Reactome" id="R-HSA-193692">
    <property type="pathway name" value="Regulated proteolysis of p75NTR"/>
</dbReference>
<dbReference type="Reactome" id="R-HSA-2122948">
    <property type="pathway name" value="Activated NOTCH1 Transmits Signal to the Nucleus"/>
</dbReference>
<dbReference type="Reactome" id="R-HSA-2644606">
    <property type="pathway name" value="Constitutive Signaling by NOTCH1 PEST Domain Mutants"/>
</dbReference>
<dbReference type="Reactome" id="R-HSA-2660826">
    <property type="pathway name" value="Constitutive Signaling by NOTCH1 t(7;9)(NOTCH1:M1580_K2555) Translocation Mutant"/>
</dbReference>
<dbReference type="Reactome" id="R-HSA-2691232">
    <property type="pathway name" value="Constitutive Signaling by NOTCH1 HD Domain Mutants"/>
</dbReference>
<dbReference type="Reactome" id="R-HSA-2894862">
    <property type="pathway name" value="Constitutive Signaling by NOTCH1 HD+PEST Domain Mutants"/>
</dbReference>
<dbReference type="Reactome" id="R-HSA-5362798">
    <property type="pathway name" value="Release of Hh-Np from the secreting cell"/>
</dbReference>
<dbReference type="Reactome" id="R-HSA-75893">
    <property type="pathway name" value="TNF signaling"/>
</dbReference>
<dbReference type="Reactome" id="R-HSA-9662834">
    <property type="pathway name" value="CD163 mediating an anti-inflammatory response"/>
</dbReference>
<dbReference type="Reactome" id="R-HSA-982772">
    <property type="pathway name" value="Growth hormone receptor signaling"/>
</dbReference>
<dbReference type="SignaLink" id="P78536"/>
<dbReference type="SIGNOR" id="P78536"/>
<dbReference type="BioGRID-ORCS" id="6868">
    <property type="hits" value="15 hits in 1172 CRISPR screens"/>
</dbReference>
<dbReference type="ChiTaRS" id="ADAM17">
    <property type="organism name" value="human"/>
</dbReference>
<dbReference type="EvolutionaryTrace" id="P78536"/>
<dbReference type="GeneWiki" id="ADAM17"/>
<dbReference type="GenomeRNAi" id="6868"/>
<dbReference type="Pharos" id="P78536">
    <property type="development level" value="Tchem"/>
</dbReference>
<dbReference type="PRO" id="PR:P78536"/>
<dbReference type="Proteomes" id="UP000005640">
    <property type="component" value="Chromosome 2"/>
</dbReference>
<dbReference type="RNAct" id="P78536">
    <property type="molecule type" value="protein"/>
</dbReference>
<dbReference type="Bgee" id="ENSG00000151694">
    <property type="expression patterns" value="Expressed in oocyte and 209 other cell types or tissues"/>
</dbReference>
<dbReference type="ExpressionAtlas" id="P78536">
    <property type="expression patterns" value="baseline and differential"/>
</dbReference>
<dbReference type="GO" id="GO:0015629">
    <property type="term" value="C:actin cytoskeleton"/>
    <property type="evidence" value="ECO:0000314"/>
    <property type="project" value="BHF-UCL"/>
</dbReference>
<dbReference type="GO" id="GO:0016324">
    <property type="term" value="C:apical plasma membrane"/>
    <property type="evidence" value="ECO:0000314"/>
    <property type="project" value="BHF-UCL"/>
</dbReference>
<dbReference type="GO" id="GO:0009986">
    <property type="term" value="C:cell surface"/>
    <property type="evidence" value="ECO:0000314"/>
    <property type="project" value="BHF-UCL"/>
</dbReference>
<dbReference type="GO" id="GO:0005737">
    <property type="term" value="C:cytoplasm"/>
    <property type="evidence" value="ECO:0000314"/>
    <property type="project" value="BHF-UCL"/>
</dbReference>
<dbReference type="GO" id="GO:0005829">
    <property type="term" value="C:cytosol"/>
    <property type="evidence" value="ECO:0000314"/>
    <property type="project" value="HPA"/>
</dbReference>
<dbReference type="GO" id="GO:0005788">
    <property type="term" value="C:endoplasmic reticulum lumen"/>
    <property type="evidence" value="ECO:0000304"/>
    <property type="project" value="Reactome"/>
</dbReference>
<dbReference type="GO" id="GO:0000139">
    <property type="term" value="C:Golgi membrane"/>
    <property type="evidence" value="ECO:0000304"/>
    <property type="project" value="Reactome"/>
</dbReference>
<dbReference type="GO" id="GO:0016020">
    <property type="term" value="C:membrane"/>
    <property type="evidence" value="ECO:0007005"/>
    <property type="project" value="UniProtKB"/>
</dbReference>
<dbReference type="GO" id="GO:0045121">
    <property type="term" value="C:membrane raft"/>
    <property type="evidence" value="ECO:0000314"/>
    <property type="project" value="BHF-UCL"/>
</dbReference>
<dbReference type="GO" id="GO:0005886">
    <property type="term" value="C:plasma membrane"/>
    <property type="evidence" value="ECO:0000314"/>
    <property type="project" value="UniProtKB"/>
</dbReference>
<dbReference type="GO" id="GO:0019955">
    <property type="term" value="F:cytokine binding"/>
    <property type="evidence" value="ECO:0000353"/>
    <property type="project" value="BHF-UCL"/>
</dbReference>
<dbReference type="GO" id="GO:0004175">
    <property type="term" value="F:endopeptidase activity"/>
    <property type="evidence" value="ECO:0000315"/>
    <property type="project" value="UniProtKB"/>
</dbReference>
<dbReference type="GO" id="GO:0005178">
    <property type="term" value="F:integrin binding"/>
    <property type="evidence" value="ECO:0000353"/>
    <property type="project" value="BHF-UCL"/>
</dbReference>
<dbReference type="GO" id="GO:0005138">
    <property type="term" value="F:interleukin-6 receptor binding"/>
    <property type="evidence" value="ECO:0000353"/>
    <property type="project" value="BHF-UCL"/>
</dbReference>
<dbReference type="GO" id="GO:0046872">
    <property type="term" value="F:metal ion binding"/>
    <property type="evidence" value="ECO:0007669"/>
    <property type="project" value="UniProtKB-KW"/>
</dbReference>
<dbReference type="GO" id="GO:0070573">
    <property type="term" value="F:metallodipeptidase activity"/>
    <property type="evidence" value="ECO:0007669"/>
    <property type="project" value="Ensembl"/>
</dbReference>
<dbReference type="GO" id="GO:0004222">
    <property type="term" value="F:metalloendopeptidase activity"/>
    <property type="evidence" value="ECO:0000314"/>
    <property type="project" value="UniProtKB"/>
</dbReference>
<dbReference type="GO" id="GO:1902945">
    <property type="term" value="F:metalloendopeptidase activity involved in amyloid precursor protein catabolic process"/>
    <property type="evidence" value="ECO:0000314"/>
    <property type="project" value="ARUK-UCL"/>
</dbReference>
<dbReference type="GO" id="GO:0008237">
    <property type="term" value="F:metallopeptidase activity"/>
    <property type="evidence" value="ECO:0000314"/>
    <property type="project" value="BHF-UCL"/>
</dbReference>
<dbReference type="GO" id="GO:0005112">
    <property type="term" value="F:Notch binding"/>
    <property type="evidence" value="ECO:0000314"/>
    <property type="project" value="UniProtKB"/>
</dbReference>
<dbReference type="GO" id="GO:0030165">
    <property type="term" value="F:PDZ domain binding"/>
    <property type="evidence" value="ECO:0000353"/>
    <property type="project" value="BHF-UCL"/>
</dbReference>
<dbReference type="GO" id="GO:0008233">
    <property type="term" value="F:peptidase activity"/>
    <property type="evidence" value="ECO:0000304"/>
    <property type="project" value="ARUK-UCL"/>
</dbReference>
<dbReference type="GO" id="GO:0017124">
    <property type="term" value="F:SH3 domain binding"/>
    <property type="evidence" value="ECO:0007669"/>
    <property type="project" value="UniProtKB-KW"/>
</dbReference>
<dbReference type="GO" id="GO:0043120">
    <property type="term" value="F:tumor necrosis factor binding"/>
    <property type="evidence" value="ECO:0000314"/>
    <property type="project" value="ARUK-UCL"/>
</dbReference>
<dbReference type="GO" id="GO:0042987">
    <property type="term" value="P:amyloid precursor protein catabolic process"/>
    <property type="evidence" value="ECO:0000314"/>
    <property type="project" value="ARUK-UCL"/>
</dbReference>
<dbReference type="GO" id="GO:0030183">
    <property type="term" value="P:B cell differentiation"/>
    <property type="evidence" value="ECO:0000250"/>
    <property type="project" value="BHF-UCL"/>
</dbReference>
<dbReference type="GO" id="GO:0007155">
    <property type="term" value="P:cell adhesion"/>
    <property type="evidence" value="ECO:0000314"/>
    <property type="project" value="BHF-UCL"/>
</dbReference>
<dbReference type="GO" id="GO:0033627">
    <property type="term" value="P:cell adhesion mediated by integrin"/>
    <property type="evidence" value="ECO:0000314"/>
    <property type="project" value="BHF-UCL"/>
</dbReference>
<dbReference type="GO" id="GO:0048870">
    <property type="term" value="P:cell motility"/>
    <property type="evidence" value="ECO:0000250"/>
    <property type="project" value="BHF-UCL"/>
</dbReference>
<dbReference type="GO" id="GO:0071403">
    <property type="term" value="P:cellular response to high density lipoprotein particle stimulus"/>
    <property type="evidence" value="ECO:0000314"/>
    <property type="project" value="BHF-UCL"/>
</dbReference>
<dbReference type="GO" id="GO:0071679">
    <property type="term" value="P:commissural neuron axon guidance"/>
    <property type="evidence" value="ECO:0000315"/>
    <property type="project" value="FlyBase"/>
</dbReference>
<dbReference type="GO" id="GO:0140447">
    <property type="term" value="P:cytokine precursor processing"/>
    <property type="evidence" value="ECO:0000314"/>
    <property type="project" value="BHF-UCL"/>
</dbReference>
<dbReference type="GO" id="GO:0050830">
    <property type="term" value="P:defense response to Gram-positive bacterium"/>
    <property type="evidence" value="ECO:0000315"/>
    <property type="project" value="BHF-UCL"/>
</dbReference>
<dbReference type="GO" id="GO:0007173">
    <property type="term" value="P:epidermal growth factor receptor signaling pathway"/>
    <property type="evidence" value="ECO:0000314"/>
    <property type="project" value="BHF-UCL"/>
</dbReference>
<dbReference type="GO" id="GO:0002467">
    <property type="term" value="P:germinal center formation"/>
    <property type="evidence" value="ECO:0000250"/>
    <property type="project" value="BHF-UCL"/>
</dbReference>
<dbReference type="GO" id="GO:0006509">
    <property type="term" value="P:membrane protein ectodomain proteolysis"/>
    <property type="evidence" value="ECO:0000314"/>
    <property type="project" value="UniProtKB"/>
</dbReference>
<dbReference type="GO" id="GO:0120163">
    <property type="term" value="P:negative regulation of cold-induced thermogenesis"/>
    <property type="evidence" value="ECO:0000250"/>
    <property type="project" value="YuBioLab"/>
</dbReference>
<dbReference type="GO" id="GO:0010977">
    <property type="term" value="P:negative regulation of neuron projection development"/>
    <property type="evidence" value="ECO:0007669"/>
    <property type="project" value="Ensembl"/>
</dbReference>
<dbReference type="GO" id="GO:0030512">
    <property type="term" value="P:negative regulation of transforming growth factor beta receptor signaling pathway"/>
    <property type="evidence" value="ECO:0000315"/>
    <property type="project" value="UniProtKB"/>
</dbReference>
<dbReference type="GO" id="GO:0002446">
    <property type="term" value="P:neutrophil mediated immunity"/>
    <property type="evidence" value="ECO:0000305"/>
    <property type="project" value="BHF-UCL"/>
</dbReference>
<dbReference type="GO" id="GO:0007220">
    <property type="term" value="P:Notch receptor processing"/>
    <property type="evidence" value="ECO:0000314"/>
    <property type="project" value="UniProtKB"/>
</dbReference>
<dbReference type="GO" id="GO:0007219">
    <property type="term" value="P:Notch signaling pathway"/>
    <property type="evidence" value="ECO:0000318"/>
    <property type="project" value="GO_Central"/>
</dbReference>
<dbReference type="GO" id="GO:0043491">
    <property type="term" value="P:phosphatidylinositol 3-kinase/protein kinase B signal transduction"/>
    <property type="evidence" value="ECO:0000315"/>
    <property type="project" value="BHF-UCL"/>
</dbReference>
<dbReference type="GO" id="GO:0043536">
    <property type="term" value="P:positive regulation of blood vessel endothelial cell migration"/>
    <property type="evidence" value="ECO:0000314"/>
    <property type="project" value="BHF-UCL"/>
</dbReference>
<dbReference type="GO" id="GO:0030307">
    <property type="term" value="P:positive regulation of cell growth"/>
    <property type="evidence" value="ECO:0000315"/>
    <property type="project" value="BHF-UCL"/>
</dbReference>
<dbReference type="GO" id="GO:0030335">
    <property type="term" value="P:positive regulation of cell migration"/>
    <property type="evidence" value="ECO:0000314"/>
    <property type="project" value="ARUK-UCL"/>
</dbReference>
<dbReference type="GO" id="GO:0008284">
    <property type="term" value="P:positive regulation of cell population proliferation"/>
    <property type="evidence" value="ECO:0000315"/>
    <property type="project" value="BHF-UCL"/>
</dbReference>
<dbReference type="GO" id="GO:0032722">
    <property type="term" value="P:positive regulation of chemokine production"/>
    <property type="evidence" value="ECO:0000315"/>
    <property type="project" value="BHF-UCL"/>
</dbReference>
<dbReference type="GO" id="GO:0045742">
    <property type="term" value="P:positive regulation of epidermal growth factor receptor signaling pathway"/>
    <property type="evidence" value="ECO:0000315"/>
    <property type="project" value="BHF-UCL"/>
</dbReference>
<dbReference type="GO" id="GO:0045741">
    <property type="term" value="P:positive regulation of epidermal growth factor-activated receptor activity"/>
    <property type="evidence" value="ECO:0000314"/>
    <property type="project" value="BHF-UCL"/>
</dbReference>
<dbReference type="GO" id="GO:1900087">
    <property type="term" value="P:positive regulation of G1/S transition of mitotic cell cycle"/>
    <property type="evidence" value="ECO:0000315"/>
    <property type="project" value="BHF-UCL"/>
</dbReference>
<dbReference type="GO" id="GO:0002690">
    <property type="term" value="P:positive regulation of leukocyte chemotaxis"/>
    <property type="evidence" value="ECO:0000305"/>
    <property type="project" value="BHF-UCL"/>
</dbReference>
<dbReference type="GO" id="GO:0010820">
    <property type="term" value="P:positive regulation of T cell chemotaxis"/>
    <property type="evidence" value="ECO:0000315"/>
    <property type="project" value="BHF-UCL"/>
</dbReference>
<dbReference type="GO" id="GO:0032760">
    <property type="term" value="P:positive regulation of tumor necrosis factor production"/>
    <property type="evidence" value="ECO:0000314"/>
    <property type="project" value="BHF-UCL"/>
</dbReference>
<dbReference type="GO" id="GO:1903265">
    <property type="term" value="P:positive regulation of tumor necrosis factor-mediated signaling pathway"/>
    <property type="evidence" value="ECO:0000314"/>
    <property type="project" value="ARUK-UCL"/>
</dbReference>
<dbReference type="GO" id="GO:1905564">
    <property type="term" value="P:positive regulation of vascular endothelial cell proliferation"/>
    <property type="evidence" value="ECO:0000314"/>
    <property type="project" value="BHF-UCL"/>
</dbReference>
<dbReference type="GO" id="GO:0002532">
    <property type="term" value="P:production of molecular mediator involved in inflammatory response"/>
    <property type="evidence" value="ECO:0007669"/>
    <property type="project" value="Ensembl"/>
</dbReference>
<dbReference type="GO" id="GO:0016485">
    <property type="term" value="P:protein processing"/>
    <property type="evidence" value="ECO:0000314"/>
    <property type="project" value="ARUK-UCL"/>
</dbReference>
<dbReference type="GO" id="GO:0006508">
    <property type="term" value="P:proteolysis"/>
    <property type="evidence" value="ECO:0000314"/>
    <property type="project" value="UniProtKB"/>
</dbReference>
<dbReference type="GO" id="GO:0048679">
    <property type="term" value="P:regulation of axon regeneration"/>
    <property type="evidence" value="ECO:0007669"/>
    <property type="project" value="Ensembl"/>
</dbReference>
<dbReference type="GO" id="GO:0033025">
    <property type="term" value="P:regulation of mast cell apoptotic process"/>
    <property type="evidence" value="ECO:0000250"/>
    <property type="project" value="BHF-UCL"/>
</dbReference>
<dbReference type="GO" id="GO:2001222">
    <property type="term" value="P:regulation of neuron migration"/>
    <property type="evidence" value="ECO:0007669"/>
    <property type="project" value="Ensembl"/>
</dbReference>
<dbReference type="GO" id="GO:0001666">
    <property type="term" value="P:response to hypoxia"/>
    <property type="evidence" value="ECO:0000314"/>
    <property type="project" value="BHF-UCL"/>
</dbReference>
<dbReference type="GO" id="GO:0032496">
    <property type="term" value="P:response to lipopolysaccharide"/>
    <property type="evidence" value="ECO:0000314"/>
    <property type="project" value="BHF-UCL"/>
</dbReference>
<dbReference type="GO" id="GO:0009410">
    <property type="term" value="P:response to xenobiotic stimulus"/>
    <property type="evidence" value="ECO:0000250"/>
    <property type="project" value="BHF-UCL"/>
</dbReference>
<dbReference type="GO" id="GO:0023061">
    <property type="term" value="P:signal release"/>
    <property type="evidence" value="ECO:0000314"/>
    <property type="project" value="BHF-UCL"/>
</dbReference>
<dbReference type="GO" id="GO:0048536">
    <property type="term" value="P:spleen development"/>
    <property type="evidence" value="ECO:0000250"/>
    <property type="project" value="BHF-UCL"/>
</dbReference>
<dbReference type="GO" id="GO:0033077">
    <property type="term" value="P:T cell differentiation in thymus"/>
    <property type="evidence" value="ECO:0000250"/>
    <property type="project" value="BHF-UCL"/>
</dbReference>
<dbReference type="GO" id="GO:0035313">
    <property type="term" value="P:wound healing, spreading of epidermal cells"/>
    <property type="evidence" value="ECO:0000270"/>
    <property type="project" value="BHF-UCL"/>
</dbReference>
<dbReference type="CDD" id="cd14246">
    <property type="entry name" value="ADAM17_MPD"/>
    <property type="match status" value="1"/>
</dbReference>
<dbReference type="CDD" id="cd04270">
    <property type="entry name" value="ZnMc_TACE_like"/>
    <property type="match status" value="1"/>
</dbReference>
<dbReference type="FunFam" id="3.40.390.10:FF:000017">
    <property type="entry name" value="Disintegrin and metalloproteinase domain-containing protein 17"/>
    <property type="match status" value="1"/>
</dbReference>
<dbReference type="FunFam" id="4.10.70.10:FF:000003">
    <property type="entry name" value="Disintegrin and metalloproteinase domain-containing protein 17"/>
    <property type="match status" value="1"/>
</dbReference>
<dbReference type="FunFam" id="4.10.70.30:FF:000002">
    <property type="entry name" value="Disintegrin and metalloproteinase domain-containing protein 17"/>
    <property type="match status" value="1"/>
</dbReference>
<dbReference type="Gene3D" id="4.10.70.30">
    <property type="match status" value="1"/>
</dbReference>
<dbReference type="Gene3D" id="3.40.390.10">
    <property type="entry name" value="Collagenase (Catalytic Domain)"/>
    <property type="match status" value="1"/>
</dbReference>
<dbReference type="Gene3D" id="4.10.70.10">
    <property type="entry name" value="Disintegrin domain"/>
    <property type="match status" value="1"/>
</dbReference>
<dbReference type="InterPro" id="IPR034025">
    <property type="entry name" value="ADAM10_ADAM17"/>
</dbReference>
<dbReference type="InterPro" id="IPR032029">
    <property type="entry name" value="ADAM17_MPD"/>
</dbReference>
<dbReference type="InterPro" id="IPR051489">
    <property type="entry name" value="ADAM_Metalloproteinase"/>
</dbReference>
<dbReference type="InterPro" id="IPR001762">
    <property type="entry name" value="Disintegrin_dom"/>
</dbReference>
<dbReference type="InterPro" id="IPR036436">
    <property type="entry name" value="Disintegrin_dom_sf"/>
</dbReference>
<dbReference type="InterPro" id="IPR024079">
    <property type="entry name" value="MetalloPept_cat_dom_sf"/>
</dbReference>
<dbReference type="InterPro" id="IPR001590">
    <property type="entry name" value="Peptidase_M12B"/>
</dbReference>
<dbReference type="PANTHER" id="PTHR45702">
    <property type="entry name" value="ADAM10/ADAM17 METALLOPEPTIDASE FAMILY MEMBER"/>
    <property type="match status" value="1"/>
</dbReference>
<dbReference type="PANTHER" id="PTHR45702:SF6">
    <property type="entry name" value="DISINTEGRIN AND METALLOPROTEINASE DOMAIN-CONTAINING PROTEIN 17"/>
    <property type="match status" value="1"/>
</dbReference>
<dbReference type="Pfam" id="PF16698">
    <property type="entry name" value="ADAM17_MPD"/>
    <property type="match status" value="1"/>
</dbReference>
<dbReference type="Pfam" id="PF00200">
    <property type="entry name" value="Disintegrin"/>
    <property type="match status" value="1"/>
</dbReference>
<dbReference type="Pfam" id="PF13688">
    <property type="entry name" value="Reprolysin_5"/>
    <property type="match status" value="1"/>
</dbReference>
<dbReference type="SMART" id="SM00050">
    <property type="entry name" value="DISIN"/>
    <property type="match status" value="1"/>
</dbReference>
<dbReference type="SUPFAM" id="SSF57552">
    <property type="entry name" value="Blood coagulation inhibitor (disintegrin)"/>
    <property type="match status" value="1"/>
</dbReference>
<dbReference type="SUPFAM" id="SSF55486">
    <property type="entry name" value="Metalloproteases ('zincins'), catalytic domain"/>
    <property type="match status" value="1"/>
</dbReference>
<dbReference type="PROSITE" id="PS50215">
    <property type="entry name" value="ADAM_MEPRO"/>
    <property type="match status" value="1"/>
</dbReference>
<dbReference type="PROSITE" id="PS50214">
    <property type="entry name" value="DISINTEGRIN_2"/>
    <property type="match status" value="1"/>
</dbReference>
<dbReference type="PROSITE" id="PS00142">
    <property type="entry name" value="ZINC_PROTEASE"/>
    <property type="match status" value="1"/>
</dbReference>
<sequence length="824" mass="93021">MRQSLLFLTSVVPFVLAPRPPDDPGFGPHQRLEKLDSLLSDYDILSLSNIQQHSVRKRDLQTSTHVETLLTFSALKRHFKLYLTSSTERFSQNFKVVVVDGKNESEYTVKWQDFFTGHVVGEPDSRVLAHIRDDDVIIRINTDGAEYNIEPLWRFVNDTKDKRMLVYKSEDIKNVSRLQSPKVCGYLKVDNEELLPKGLVDREPPEELVHRVKRRADPDPMKNTCKLLVVADHRFYRYMGRGEESTTTNYLIELIDRVDDIYRNTSWDNAGFKGYGIQIEQIRILKSPQEVKPGEKHYNMAKSYPNEEKDAWDVKMLLEQFSFDIAEEASKVCLAHLFTYQDFDMGTLGLAYVGSPRANSHGGVCPKAYYSPVGKKNIYLNSGLTSTKNYGKTILTKEADLVTTHELGHNFGAEHDPDGLAECAPNEDQGGKYVMYPIAVSGDHENNKMFSNCSKQSIYKTIESKAQECFQERSNKVCGNSRVDEGEECDPGIMYLNNDTCCNSDCTLKEGVQCSDRNSPCCKNCQFETAQKKCQEAINATCKGVSYCTGNSSECPPPGNAEDDTVCLDLGKCKDGKCIPFCEREQQLESCACNETDNSCKVCCRDLSGRCVPYVDAEQKNLFLRKGKPCTVGFCDMNGKCEKRVQDVIERFWDFIDQLSINTFGKFLADNIVGSVLVFSLIFWIPFSILVHCVDKKLDKQYESLSLFHPSNVEMLSSMDSASVRIIKPFPAPQTPGRLQPAPVIPSAPAAPKLDHQRMDTIQEDPSTDSHMDEDGFEKDPFPNSSTAAKSFEDLTDHPVTRSEKAASFKLQRQNRVDSKETEC</sequence>
<comment type="function">
    <text evidence="2 10 13 15 16 17 18 19 20 22 23">Transmembrane metalloprotease which mediates the ectodomain shedding of a myriad of transmembrane proteins including adhesion proteins, growth factor precursors and cytokines important for inflammation and immunity (PubMed:24226769, PubMed:24227843, PubMed:28060820, PubMed:28923481). Cleaves the membrane-bound precursor of TNF-alpha to its mature soluble form (PubMed:36078095, PubMed:9034191). Responsible for the proteolytical release of soluble JAM3 from endothelial cells surface (PubMed:20592283). Responsible for the proteolytic release of several other cell-surface proteins, including p75 TNF-receptor, interleukin 1 receptor type II, p55 TNF-receptor, transforming growth factor-alpha, L-selectin, growth hormone receptor, MUC1 and the amyloid precursor protein (PubMed:12441351). Acts as an activator of Notch pathway by mediating cleavage of Notch, generating the membrane-associated intermediate fragment called Notch extracellular truncation (NEXT) (PubMed:24226769). Plays a role in the proteolytic processing of ACE2 (PubMed:24227843). Plays a role in hemostasis through shedding of GP1BA, the platelet glycoprotein Ib alpha chain (By similarity). Mediates the proteolytic cleavage of LAG3, leading to release the secreted form of LAG3 (By similarity). Mediates the proteolytic cleavage of IL6R, leading to the release of secreted form of IL6R (PubMed:26876177, PubMed:28060820). Mediates the proteolytic cleavage and shedding of FCGR3A upon NK cell stimulation, a mechanism that allows for increased NK cell motility and detachment from opsonized target cells. Cleaves TREM2, resulting in shedding of the TREM2 ectodomain (PubMed:28923481).</text>
</comment>
<comment type="catalytic activity">
    <reaction evidence="10 13 16 20">
        <text>Narrow endopeptidase specificity. Cleaves Pro-Leu-Ala-Gln-Ala-|-Val-Arg-Ser-Ser-Ser in the membrane-bound, 26-kDa form of tumor necrosis factor alpha (TNFalpha). Similarly cleaves other membrane-anchored, cell-surface proteins to 'shed' the extracellular domains.</text>
        <dbReference type="EC" id="3.4.24.86"/>
    </reaction>
</comment>
<comment type="cofactor">
    <cofactor evidence="24">
        <name>Zn(2+)</name>
        <dbReference type="ChEBI" id="CHEBI:29105"/>
    </cofactor>
    <text evidence="24">Binds 1 zinc ion per subunit.</text>
</comment>
<comment type="subunit">
    <text evidence="10 12 21 22">Interacts with MAD2L1, MAPK14 and MUC1 (PubMed:12441351, PubMed:20188673). Interacts with iRhom1/RHBDF1 and iRhom2/RHBDF2 (PubMed:29897333). Interacts with FRMD8 via its interaction with iRhom1/RHBDF1 and iRhom2/RHBDF2 (PubMed:29897333). Interacts with TSPAN8 (PubMed:36078095).</text>
</comment>
<comment type="interaction">
    <interactant intactId="EBI-78188">
        <id>P78536</id>
    </interactant>
    <interactant intactId="EBI-357481">
        <id>Q12959</id>
        <label>DLG1</label>
    </interactant>
    <organismsDiffer>false</organismsDiffer>
    <experiments>7</experiments>
</comment>
<comment type="interaction">
    <interactant intactId="EBI-78188">
        <id>P78536</id>
    </interactant>
    <interactant intactId="EBI-8550965">
        <id>Q13585</id>
        <label>GPR50</label>
    </interactant>
    <organismsDiffer>false</organismsDiffer>
    <experiments>2</experiments>
</comment>
<comment type="interaction">
    <interactant intactId="EBI-78188">
        <id>P78536</id>
    </interactant>
    <interactant intactId="EBI-703066">
        <id>P05556</id>
        <label>ITGB1</label>
    </interactant>
    <organismsDiffer>false</organismsDiffer>
    <experiments>2</experiments>
</comment>
<comment type="interaction">
    <interactant intactId="EBI-78188">
        <id>P78536</id>
    </interactant>
    <interactant intactId="EBI-78203">
        <id>Q13257</id>
        <label>MAD2L1</label>
    </interactant>
    <organismsDiffer>false</organismsDiffer>
    <experiments>3</experiments>
</comment>
<comment type="interaction">
    <interactant intactId="EBI-78188">
        <id>P78536</id>
    </interactant>
    <interactant intactId="EBI-647271">
        <id>Q80WQ6</id>
        <label>Rhbdf2</label>
    </interactant>
    <organismsDiffer>true</organismsDiffer>
    <experiments>2</experiments>
</comment>
<comment type="subcellular location">
    <subcellularLocation>
        <location evidence="22">Cell membrane</location>
        <topology>Single-pass type I membrane protein</topology>
    </subcellularLocation>
</comment>
<comment type="alternative products">
    <event type="alternative splicing"/>
    <isoform>
        <id>P78536-1</id>
        <name>A</name>
        <sequence type="displayed"/>
    </isoform>
    <isoform>
        <id>P78536-2</id>
        <name>B</name>
        <sequence type="described" ref="VSP_005478"/>
    </isoform>
</comment>
<comment type="tissue specificity">
    <text evidence="17">Ubiquitously expressed. Expressed at highest levels in adult heart, placenta, skeletal muscle, pancreas, spleen, thymus, prostate, testes, ovary and small intestine, and in fetal brain, lung, liver and kidney. Expressed in natural killer cells (at protein level) (PubMed:24337742).</text>
</comment>
<comment type="induction">
    <text>In arthritis-affected cartilage.</text>
</comment>
<comment type="domain">
    <text evidence="1">Must be membrane anchored to cleave the different substrates. The cytoplasmic domain is not required for the this activity. Only the catalytic domain is essential to shed TNF and p75 TNFR (By similarity).</text>
</comment>
<comment type="domain">
    <text>The conserved cysteine present in the cysteine-switch motif binds the catalytic zinc ion, thus inhibiting the enzyme. The dissociation of the cysteine from the zinc ion upon the activation-peptide release activates the enzyme.</text>
</comment>
<comment type="PTM">
    <text evidence="1">The precursor is cleaved by a furin endopeptidase.</text>
</comment>
<comment type="PTM">
    <text evidence="9 11 12">Phosphorylated. Stimulation by growth factor or phorbol 12-myristate 13-acetate induces phosphorylation of Ser-819 but decreases phosphorylation of Ser-791. Phosphorylation at Thr-735 by MAPK14 is required for ADAM17-mediated ectodomain shedding.</text>
</comment>
<comment type="disease" evidence="14">
    <disease id="DI-03306">
        <name>Inflammatory skin and bowel disease, neonatal, 1</name>
        <acronym>NISBD1</acronym>
        <description>A disorder characterized by inflammatory features with neonatal onset, involving the skin, hair, and gut. The skin lesions involve perioral and perianal erythema, psoriasiform erythroderma, with flares of erythema, scaling, and widespread pustules. Gastrointestinal symptoms include malabsorptive diarrhea that is exacerbated by intercurrent gastrointestinal infections. The hair is short or broken, and the eyelashes and eyebrows are wiry and disorganized.</description>
        <dbReference type="MIM" id="614328"/>
    </disease>
    <text>The disease is caused by variants affecting the gene represented in this entry.</text>
</comment>
<comment type="online information" name="Wikipedia">
    <link uri="https://en.wikipedia.org/wiki/Tumor_Necrosis_Factor_Alpha_Converting_Enzyme"/>
    <text>Tumor necrosis factor alpha-converting enzyme entry</text>
</comment>
<comment type="online information" name="Atlas of Genetics and Cytogenetics in Oncology and Haematology">
    <link uri="https://atlasgeneticsoncology.org/gene/572/ADAM17"/>
</comment>
<evidence type="ECO:0000250" key="1"/>
<evidence type="ECO:0000250" key="2">
    <source>
        <dbReference type="UniProtKB" id="Q9Z0F8"/>
    </source>
</evidence>
<evidence type="ECO:0000250" key="3">
    <source>
        <dbReference type="UniProtKB" id="Q9Z1K9"/>
    </source>
</evidence>
<evidence type="ECO:0000255" key="4"/>
<evidence type="ECO:0000255" key="5">
    <source>
        <dbReference type="PROSITE-ProRule" id="PRU00068"/>
    </source>
</evidence>
<evidence type="ECO:0000255" key="6">
    <source>
        <dbReference type="PROSITE-ProRule" id="PRU00276"/>
    </source>
</evidence>
<evidence type="ECO:0000255" key="7">
    <source>
        <dbReference type="PROSITE-ProRule" id="PRU10095"/>
    </source>
</evidence>
<evidence type="ECO:0000256" key="8">
    <source>
        <dbReference type="SAM" id="MobiDB-lite"/>
    </source>
</evidence>
<evidence type="ECO:0000269" key="9">
    <source>
    </source>
</evidence>
<evidence type="ECO:0000269" key="10">
    <source>
    </source>
</evidence>
<evidence type="ECO:0000269" key="11">
    <source>
    </source>
</evidence>
<evidence type="ECO:0000269" key="12">
    <source>
    </source>
</evidence>
<evidence type="ECO:0000269" key="13">
    <source>
    </source>
</evidence>
<evidence type="ECO:0000269" key="14">
    <source>
    </source>
</evidence>
<evidence type="ECO:0000269" key="15">
    <source>
    </source>
</evidence>
<evidence type="ECO:0000269" key="16">
    <source>
    </source>
</evidence>
<evidence type="ECO:0000269" key="17">
    <source>
    </source>
</evidence>
<evidence type="ECO:0000269" key="18">
    <source>
    </source>
</evidence>
<evidence type="ECO:0000269" key="19">
    <source>
    </source>
</evidence>
<evidence type="ECO:0000269" key="20">
    <source>
    </source>
</evidence>
<evidence type="ECO:0000269" key="21">
    <source>
    </source>
</evidence>
<evidence type="ECO:0000269" key="22">
    <source>
    </source>
</evidence>
<evidence type="ECO:0000269" key="23">
    <source>
    </source>
</evidence>
<evidence type="ECO:0000269" key="24">
    <source>
    </source>
</evidence>
<evidence type="ECO:0000303" key="25">
    <source>
    </source>
</evidence>
<evidence type="ECO:0000305" key="26"/>
<evidence type="ECO:0000312" key="27">
    <source>
        <dbReference type="HGNC" id="HGNC:195"/>
    </source>
</evidence>
<evidence type="ECO:0007744" key="28">
    <source>
    </source>
</evidence>
<evidence type="ECO:0007744" key="29">
    <source>
    </source>
</evidence>
<evidence type="ECO:0007744" key="30">
    <source>
    </source>
</evidence>
<evidence type="ECO:0007744" key="31">
    <source>
    </source>
</evidence>
<evidence type="ECO:0007744" key="32">
    <source>
    </source>
</evidence>
<evidence type="ECO:0007744" key="33">
    <source>
    </source>
</evidence>
<evidence type="ECO:0007829" key="34">
    <source>
        <dbReference type="PDB" id="2DDF"/>
    </source>
</evidence>
<evidence type="ECO:0007829" key="35">
    <source>
        <dbReference type="PDB" id="3CKI"/>
    </source>
</evidence>
<evidence type="ECO:0007829" key="36">
    <source>
        <dbReference type="PDB" id="3EDZ"/>
    </source>
</evidence>
<evidence type="ECO:0007829" key="37">
    <source>
        <dbReference type="PDB" id="3L0V"/>
    </source>
</evidence>
<evidence type="ECO:0007829" key="38">
    <source>
        <dbReference type="PDB" id="3LGP"/>
    </source>
</evidence>
<evidence type="ECO:0007829" key="39">
    <source>
        <dbReference type="PDB" id="3O64"/>
    </source>
</evidence>
<evidence type="ECO:0007829" key="40">
    <source>
        <dbReference type="PDB" id="8CQY"/>
    </source>
</evidence>
<evidence type="ECO:0007829" key="41">
    <source>
        <dbReference type="PDB" id="8SNL"/>
    </source>
</evidence>
<evidence type="ECO:0007829" key="42">
    <source>
        <dbReference type="PDB" id="8SNN"/>
    </source>
</evidence>
<evidence type="ECO:0007829" key="43">
    <source>
        <dbReference type="PDB" id="8SNO"/>
    </source>
</evidence>
<evidence type="ECO:0007829" key="44">
    <source>
        <dbReference type="PDB" id="9E6K"/>
    </source>
</evidence>
<gene>
    <name evidence="27" type="primary">ADAM17</name>
    <name type="synonym">CSVP</name>
    <name type="synonym">TACE</name>
</gene>
<proteinExistence type="evidence at protein level"/>
<accession>P78536</accession>
<accession>O60226</accession>
<feature type="signal peptide" evidence="3">
    <location>
        <begin position="1"/>
        <end position="17"/>
    </location>
</feature>
<feature type="propeptide" id="PRO_0000029088" evidence="23">
    <location>
        <begin position="18"/>
        <end position="214"/>
    </location>
</feature>
<feature type="chain" id="PRO_0000029089" description="Disintegrin and metalloproteinase domain-containing protein 17">
    <location>
        <begin position="215"/>
        <end position="824"/>
    </location>
</feature>
<feature type="topological domain" description="Extracellular" evidence="4">
    <location>
        <begin position="215"/>
        <end position="671"/>
    </location>
</feature>
<feature type="transmembrane region" description="Helical" evidence="4">
    <location>
        <begin position="672"/>
        <end position="692"/>
    </location>
</feature>
<feature type="topological domain" description="Cytoplasmic" evidence="4">
    <location>
        <begin position="693"/>
        <end position="824"/>
    </location>
</feature>
<feature type="domain" description="Peptidase M12B" evidence="6">
    <location>
        <begin position="223"/>
        <end position="474"/>
    </location>
</feature>
<feature type="domain" description="Disintegrin" evidence="5">
    <location>
        <begin position="475"/>
        <end position="563"/>
    </location>
</feature>
<feature type="region of interest" description="Crambin-like">
    <location>
        <begin position="603"/>
        <end position="671"/>
    </location>
</feature>
<feature type="region of interest" description="Disordered" evidence="8">
    <location>
        <begin position="732"/>
        <end position="824"/>
    </location>
</feature>
<feature type="short sequence motif" description="Cysteine switch" evidence="1">
    <location>
        <begin position="182"/>
        <end position="189"/>
    </location>
</feature>
<feature type="short sequence motif" description="SH3-binding" evidence="4">
    <location>
        <begin position="731"/>
        <end position="738"/>
    </location>
</feature>
<feature type="short sequence motif" description="SH3-binding" evidence="4">
    <location>
        <begin position="741"/>
        <end position="748"/>
    </location>
</feature>
<feature type="compositionally biased region" description="Low complexity" evidence="8">
    <location>
        <begin position="741"/>
        <end position="752"/>
    </location>
</feature>
<feature type="compositionally biased region" description="Basic and acidic residues" evidence="8">
    <location>
        <begin position="768"/>
        <end position="781"/>
    </location>
</feature>
<feature type="compositionally biased region" description="Basic and acidic residues" evidence="8">
    <location>
        <begin position="791"/>
        <end position="807"/>
    </location>
</feature>
<feature type="compositionally biased region" description="Basic and acidic residues" evidence="8">
    <location>
        <begin position="815"/>
        <end position="824"/>
    </location>
</feature>
<feature type="active site" evidence="6 7 24">
    <location>
        <position position="406"/>
    </location>
</feature>
<feature type="binding site" description="in inhibited form" evidence="1">
    <location>
        <position position="184"/>
    </location>
    <ligand>
        <name>Zn(2+)</name>
        <dbReference type="ChEBI" id="CHEBI:29105"/>
        <note>catalytic</note>
    </ligand>
</feature>
<feature type="binding site" evidence="24">
    <location>
        <position position="405"/>
    </location>
    <ligand>
        <name>Zn(2+)</name>
        <dbReference type="ChEBI" id="CHEBI:29105"/>
        <note>catalytic</note>
    </ligand>
</feature>
<feature type="binding site" evidence="24">
    <location>
        <position position="409"/>
    </location>
    <ligand>
        <name>Zn(2+)</name>
        <dbReference type="ChEBI" id="CHEBI:29105"/>
        <note>catalytic</note>
    </ligand>
</feature>
<feature type="binding site" evidence="24">
    <location>
        <position position="415"/>
    </location>
    <ligand>
        <name>Zn(2+)</name>
        <dbReference type="ChEBI" id="CHEBI:29105"/>
        <note>catalytic</note>
    </ligand>
</feature>
<feature type="modified residue" description="Phosphothreonine; by MAPK14" evidence="9 12">
    <location>
        <position position="735"/>
    </location>
</feature>
<feature type="modified residue" description="Phosphothreonine" evidence="32">
    <location>
        <position position="761"/>
    </location>
</feature>
<feature type="modified residue" description="Phosphoserine" evidence="3">
    <location>
        <position position="767"/>
    </location>
</feature>
<feature type="modified residue" description="Phosphoserine" evidence="28 29 30 31 32 33">
    <location>
        <position position="791"/>
    </location>
</feature>
<feature type="modified residue" description="Phosphoserine" evidence="11">
    <location>
        <position position="819"/>
    </location>
</feature>
<feature type="glycosylation site" description="N-linked (GlcNAc...) asparagine" evidence="4">
    <location>
        <position position="103"/>
    </location>
</feature>
<feature type="glycosylation site" description="N-linked (GlcNAc...) asparagine" evidence="4">
    <location>
        <position position="157"/>
    </location>
</feature>
<feature type="glycosylation site" description="N-linked (GlcNAc...) asparagine" evidence="4">
    <location>
        <position position="174"/>
    </location>
</feature>
<feature type="glycosylation site" description="N-linked (GlcNAc...) asparagine" evidence="4">
    <location>
        <position position="264"/>
    </location>
</feature>
<feature type="glycosylation site" description="N-linked (GlcNAc...) asparagine" evidence="4">
    <location>
        <position position="452"/>
    </location>
</feature>
<feature type="glycosylation site" description="N-linked (GlcNAc...) asparagine" evidence="4">
    <location>
        <position position="498"/>
    </location>
</feature>
<feature type="glycosylation site" description="N-linked (GlcNAc...) asparagine" evidence="4">
    <location>
        <position position="539"/>
    </location>
</feature>
<feature type="glycosylation site" description="N-linked (GlcNAc...) asparagine" evidence="4">
    <location>
        <position position="551"/>
    </location>
</feature>
<feature type="glycosylation site" description="N-linked (GlcNAc...) asparagine" evidence="4">
    <location>
        <position position="594"/>
    </location>
</feature>
<feature type="disulfide bond" evidence="24">
    <location>
        <begin position="225"/>
        <end position="333"/>
    </location>
</feature>
<feature type="disulfide bond" evidence="24">
    <location>
        <begin position="365"/>
        <end position="469"/>
    </location>
</feature>
<feature type="disulfide bond" evidence="24">
    <location>
        <begin position="423"/>
        <end position="453"/>
    </location>
</feature>
<feature type="disulfide bond" evidence="1">
    <location>
        <begin position="534"/>
        <end position="555"/>
    </location>
</feature>
<feature type="disulfide bond" evidence="1">
    <location>
        <begin position="573"/>
        <end position="582"/>
    </location>
</feature>
<feature type="disulfide bond" evidence="1">
    <location>
        <begin position="578"/>
        <end position="591"/>
    </location>
</feature>
<feature type="disulfide bond" evidence="1">
    <location>
        <begin position="593"/>
        <end position="600"/>
    </location>
</feature>
<feature type="splice variant" id="VSP_005478" description="In isoform B." evidence="25">
    <location>
        <begin position="695"/>
        <end position="824"/>
    </location>
</feature>
<feature type="sequence variant" id="VAR_051586" description="In dbSNP:rs34431503.">
    <original>K</original>
    <variation>E</variation>
    <location>
        <position position="162"/>
    </location>
</feature>
<feature type="sequence variant" id="VAR_051587" description="In dbSNP:rs2230818.">
    <original>R</original>
    <variation>G</variation>
    <location>
        <position position="202"/>
    </location>
</feature>
<feature type="sequence conflict" description="In Ref. 3; AAC39721." evidence="26" ref="3">
    <original>V</original>
    <variation>A</variation>
    <location>
        <position position="109"/>
    </location>
</feature>
<feature type="sequence conflict" description="In Ref. 3; AAC39721." evidence="26" ref="3">
    <original>D</original>
    <variation>N</variation>
    <location>
        <position position="563"/>
    </location>
</feature>
<feature type="sequence conflict" description="In Ref. 3; AAC39721." evidence="26" ref="3">
    <original>T</original>
    <variation>A</variation>
    <location>
        <position position="801"/>
    </location>
</feature>
<feature type="sequence conflict" description="In Ref. 3; AAC39721." evidence="26" ref="3">
    <original>D</original>
    <variation>N</variation>
    <location>
        <position position="818"/>
    </location>
</feature>
<feature type="helix" evidence="41">
    <location>
        <begin position="33"/>
        <end position="38"/>
    </location>
</feature>
<feature type="strand" evidence="41">
    <location>
        <begin position="39"/>
        <end position="43"/>
    </location>
</feature>
<feature type="helix" evidence="41">
    <location>
        <begin position="47"/>
        <end position="49"/>
    </location>
</feature>
<feature type="strand" evidence="41">
    <location>
        <begin position="50"/>
        <end position="53"/>
    </location>
</feature>
<feature type="strand" evidence="41">
    <location>
        <begin position="65"/>
        <end position="73"/>
    </location>
</feature>
<feature type="strand" evidence="41">
    <location>
        <begin position="78"/>
        <end position="85"/>
    </location>
</feature>
<feature type="helix" evidence="41">
    <location>
        <begin position="87"/>
        <end position="89"/>
    </location>
</feature>
<feature type="strand" evidence="41">
    <location>
        <begin position="96"/>
        <end position="99"/>
    </location>
</feature>
<feature type="strand" evidence="41">
    <location>
        <begin position="104"/>
        <end position="107"/>
    </location>
</feature>
<feature type="helix" evidence="41">
    <location>
        <begin position="111"/>
        <end position="113"/>
    </location>
</feature>
<feature type="strand" evidence="41">
    <location>
        <begin position="114"/>
        <end position="119"/>
    </location>
</feature>
<feature type="strand" evidence="41">
    <location>
        <begin position="122"/>
        <end position="130"/>
    </location>
</feature>
<feature type="strand" evidence="41">
    <location>
        <begin position="137"/>
        <end position="141"/>
    </location>
</feature>
<feature type="strand" evidence="41">
    <location>
        <begin position="146"/>
        <end position="151"/>
    </location>
</feature>
<feature type="helix" evidence="41">
    <location>
        <begin position="152"/>
        <end position="155"/>
    </location>
</feature>
<feature type="strand" evidence="41">
    <location>
        <begin position="163"/>
        <end position="168"/>
    </location>
</feature>
<feature type="helix" evidence="41">
    <location>
        <begin position="169"/>
        <end position="171"/>
    </location>
</feature>
<feature type="strand" evidence="41">
    <location>
        <begin position="182"/>
        <end position="185"/>
    </location>
</feature>
<feature type="helix" evidence="41">
    <location>
        <begin position="191"/>
        <end position="193"/>
    </location>
</feature>
<feature type="helix" evidence="37">
    <location>
        <begin position="220"/>
        <end position="222"/>
    </location>
</feature>
<feature type="strand" evidence="34">
    <location>
        <begin position="224"/>
        <end position="231"/>
    </location>
</feature>
<feature type="helix" evidence="34">
    <location>
        <begin position="233"/>
        <end position="238"/>
    </location>
</feature>
<feature type="turn" evidence="36">
    <location>
        <begin position="239"/>
        <end position="242"/>
    </location>
</feature>
<feature type="helix" evidence="34">
    <location>
        <begin position="244"/>
        <end position="263"/>
    </location>
</feature>
<feature type="strand" evidence="34">
    <location>
        <begin position="269"/>
        <end position="271"/>
    </location>
</feature>
<feature type="strand" evidence="34">
    <location>
        <begin position="276"/>
        <end position="284"/>
    </location>
</feature>
<feature type="strand" evidence="34">
    <location>
        <begin position="300"/>
        <end position="302"/>
    </location>
</feature>
<feature type="strand" evidence="34">
    <location>
        <begin position="309"/>
        <end position="311"/>
    </location>
</feature>
<feature type="helix" evidence="34">
    <location>
        <begin position="314"/>
        <end position="324"/>
    </location>
</feature>
<feature type="helix" evidence="34">
    <location>
        <begin position="326"/>
        <end position="329"/>
    </location>
</feature>
<feature type="strand" evidence="34">
    <location>
        <begin position="332"/>
        <end position="339"/>
    </location>
</feature>
<feature type="helix" evidence="34">
    <location>
        <begin position="344"/>
        <end position="346"/>
    </location>
</feature>
<feature type="strand" evidence="34">
    <location>
        <begin position="349"/>
        <end position="354"/>
    </location>
</feature>
<feature type="strand" evidence="39">
    <location>
        <begin position="355"/>
        <end position="357"/>
    </location>
</feature>
<feature type="strand" evidence="39">
    <location>
        <begin position="363"/>
        <end position="365"/>
    </location>
</feature>
<feature type="strand" evidence="34">
    <location>
        <begin position="368"/>
        <end position="371"/>
    </location>
</feature>
<feature type="turn" evidence="34">
    <location>
        <begin position="372"/>
        <end position="375"/>
    </location>
</feature>
<feature type="strand" evidence="34">
    <location>
        <begin position="376"/>
        <end position="379"/>
    </location>
</feature>
<feature type="strand" evidence="34">
    <location>
        <begin position="382"/>
        <end position="389"/>
    </location>
</feature>
<feature type="helix" evidence="34">
    <location>
        <begin position="396"/>
        <end position="410"/>
    </location>
</feature>
<feature type="strand" evidence="35">
    <location>
        <begin position="418"/>
        <end position="420"/>
    </location>
</feature>
<feature type="turn" evidence="34">
    <location>
        <begin position="421"/>
        <end position="423"/>
    </location>
</feature>
<feature type="helix" evidence="34">
    <location>
        <begin position="427"/>
        <end position="429"/>
    </location>
</feature>
<feature type="strand" evidence="35">
    <location>
        <begin position="436"/>
        <end position="438"/>
    </location>
</feature>
<feature type="strand" evidence="38">
    <location>
        <begin position="442"/>
        <end position="444"/>
    </location>
</feature>
<feature type="turn" evidence="34">
    <location>
        <begin position="445"/>
        <end position="448"/>
    </location>
</feature>
<feature type="helix" evidence="34">
    <location>
        <begin position="452"/>
        <end position="469"/>
    </location>
</feature>
<feature type="strand" evidence="42">
    <location>
        <begin position="480"/>
        <end position="482"/>
    </location>
</feature>
<feature type="strand" evidence="43">
    <location>
        <begin position="485"/>
        <end position="488"/>
    </location>
</feature>
<feature type="turn" evidence="42">
    <location>
        <begin position="496"/>
        <end position="498"/>
    </location>
</feature>
<feature type="strand" evidence="42">
    <location>
        <begin position="500"/>
        <end position="502"/>
    </location>
</feature>
<feature type="strand" evidence="42">
    <location>
        <begin position="506"/>
        <end position="508"/>
    </location>
</feature>
<feature type="turn" evidence="42">
    <location>
        <begin position="516"/>
        <end position="518"/>
    </location>
</feature>
<feature type="strand" evidence="41">
    <location>
        <begin position="520"/>
        <end position="523"/>
    </location>
</feature>
<feature type="strand" evidence="42">
    <location>
        <begin position="532"/>
        <end position="535"/>
    </location>
</feature>
<feature type="turn" evidence="42">
    <location>
        <begin position="539"/>
        <end position="542"/>
    </location>
</feature>
<feature type="strand" evidence="41">
    <location>
        <begin position="568"/>
        <end position="570"/>
    </location>
</feature>
<feature type="strand" evidence="42">
    <location>
        <begin position="572"/>
        <end position="574"/>
    </location>
</feature>
<feature type="strand" evidence="42">
    <location>
        <begin position="577"/>
        <end position="579"/>
    </location>
</feature>
<feature type="helix" evidence="42">
    <location>
        <begin position="581"/>
        <end position="584"/>
    </location>
</feature>
<feature type="strand" evidence="41">
    <location>
        <begin position="585"/>
        <end position="587"/>
    </location>
</feature>
<feature type="strand" evidence="42">
    <location>
        <begin position="589"/>
        <end position="591"/>
    </location>
</feature>
<feature type="helix" evidence="42">
    <location>
        <begin position="596"/>
        <end position="598"/>
    </location>
</feature>
<feature type="strand" evidence="42">
    <location>
        <begin position="603"/>
        <end position="605"/>
    </location>
</feature>
<feature type="strand" evidence="43">
    <location>
        <begin position="607"/>
        <end position="609"/>
    </location>
</feature>
<feature type="strand" evidence="42">
    <location>
        <begin position="611"/>
        <end position="613"/>
    </location>
</feature>
<feature type="turn" evidence="44">
    <location>
        <begin position="616"/>
        <end position="619"/>
    </location>
</feature>
<feature type="strand" evidence="42">
    <location>
        <begin position="631"/>
        <end position="634"/>
    </location>
</feature>
<feature type="strand" evidence="41">
    <location>
        <begin position="637"/>
        <end position="639"/>
    </location>
</feature>
<feature type="strand" evidence="42">
    <location>
        <begin position="642"/>
        <end position="645"/>
    </location>
</feature>
<feature type="helix" evidence="42">
    <location>
        <begin position="648"/>
        <end position="657"/>
    </location>
</feature>
<feature type="helix" evidence="42">
    <location>
        <begin position="661"/>
        <end position="670"/>
    </location>
</feature>
<feature type="helix" evidence="42">
    <location>
        <begin position="672"/>
        <end position="702"/>
    </location>
</feature>
<feature type="strand" evidence="40">
    <location>
        <begin position="821"/>
        <end position="824"/>
    </location>
</feature>
<name>ADA17_HUMAN</name>
<reference key="1">
    <citation type="journal article" date="1997" name="Nature">
        <title>Cloning of a disintegrin metalloproteinase that processes precursor tumour-necrosis factor-alpha.</title>
        <authorList>
            <person name="Moss M.L."/>
            <person name="Jin S.-L.C."/>
            <person name="Milla M.E."/>
            <person name="Burkhart W."/>
            <person name="Carter H.L."/>
            <person name="Chen W.-J."/>
            <person name="Clay W.C."/>
            <person name="Didsbury J.R."/>
            <person name="Hassler D."/>
            <person name="Hoffman C.R."/>
            <person name="Kost T.A."/>
            <person name="Lambert M.H."/>
            <person name="Leesnitzer M.A."/>
            <person name="McCauley P."/>
            <person name="McGeehan G."/>
            <person name="Mitchell J."/>
            <person name="Moyer M."/>
            <person name="Pahel G."/>
            <person name="Rocque W."/>
            <person name="Overton L.K."/>
            <person name="Schoenen F."/>
            <person name="Seaton T."/>
            <person name="Su J.-L."/>
            <person name="Warner J."/>
            <person name="Willard D."/>
            <person name="Becherer J.D."/>
        </authorList>
    </citation>
    <scope>NUCLEOTIDE SEQUENCE [MRNA] (ISOFORM A)</scope>
    <scope>PARTIAL PROTEIN SEQUENCE</scope>
    <scope>FUNCTION</scope>
    <source>
        <tissue>Leukocyte</tissue>
        <tissue>Monocyte</tissue>
    </source>
</reference>
<reference key="2">
    <citation type="journal article" date="1997" name="Nature">
        <title>A metalloproteinase disintegrin that releases tumour-necrosis factor-alpha from cells.</title>
        <authorList>
            <person name="Black R.A."/>
            <person name="Rauch C.T."/>
            <person name="Kozlosky C.J."/>
            <person name="Peschon J.J."/>
            <person name="Slack J.L."/>
            <person name="Wolfson M.F."/>
            <person name="Castner B.J."/>
            <person name="Stocking K.L."/>
            <person name="Reddy P."/>
            <person name="Srinivasan S."/>
            <person name="Nelson N."/>
            <person name="Bioani N."/>
            <person name="Schooley K.A."/>
            <person name="Gerhart M."/>
            <person name="Davis R."/>
            <person name="Fitzner J.N."/>
            <person name="Johnson R.S."/>
            <person name="Paxton R.J."/>
            <person name="March C.J."/>
            <person name="Cerretti D.P."/>
        </authorList>
    </citation>
    <scope>NUCLEOTIDE SEQUENCE [MRNA] (ISOFORMS A AND B)</scope>
</reference>
<reference key="3">
    <citation type="journal article" date="1998" name="J. Immunol.">
        <title>TNF-alpha convertase enzyme from human arthritis-affected cartilage: isolation of cDNA by differential display, expression of the active enzyme, and regulation of TNF-alpha.</title>
        <authorList>
            <person name="Patel I.R."/>
            <person name="Attur M.G."/>
            <person name="Patel R.N."/>
            <person name="Stuchin S.A."/>
            <person name="Abagyan R.A."/>
            <person name="Abramson S.B."/>
            <person name="Amin A.R."/>
        </authorList>
    </citation>
    <scope>NUCLEOTIDE SEQUENCE [MRNA] (ISOFORM A)</scope>
    <source>
        <tissue>Cartilage</tissue>
    </source>
</reference>
<reference key="4">
    <citation type="journal article" date="2002" name="Mol. Biol. Cell">
        <title>Extracellular signal-regulated kinase phosphorylates tumor necrosis factor alpha-converting enzyme at threonine 735: a potential role in regulated shedding.</title>
        <authorList>
            <person name="Diaz-Rodriguez E."/>
            <person name="Montero J.C."/>
            <person name="Esparis-Ogando A."/>
            <person name="Yuste L."/>
            <person name="Pandiella A."/>
        </authorList>
    </citation>
    <scope>PHOSPHORYLATION AT THR-735</scope>
</reference>
<reference key="5">
    <citation type="journal article" date="2003" name="J. Biol. Chem.">
        <title>Tumor necrosis factor-alpha converting enzyme/ADAM 17 mediates MUC1 shedding.</title>
        <authorList>
            <person name="Thathiah A."/>
            <person name="Blobel C.P."/>
            <person name="Carson D.D."/>
        </authorList>
    </citation>
    <scope>FUNCTION</scope>
    <scope>CATALYTIC ACTIVITY</scope>
    <scope>INTERACTION WITH MUC1</scope>
</reference>
<reference key="6">
    <citation type="journal article" date="2003" name="J. Biol. Chem.">
        <title>Characterization of growth factor-induced serine phosphorylation of tumor necrosis factor-alpha converting enzyme and of an alternatively translated polypeptide.</title>
        <authorList>
            <person name="Fan H."/>
            <person name="Turck C.W."/>
            <person name="Derynck R."/>
        </authorList>
    </citation>
    <scope>PHOSPHORYLATION AT SER-819</scope>
</reference>
<reference key="7">
    <citation type="journal article" date="2006" name="Cell">
        <title>Global, in vivo, and site-specific phosphorylation dynamics in signaling networks.</title>
        <authorList>
            <person name="Olsen J.V."/>
            <person name="Blagoev B."/>
            <person name="Gnad F."/>
            <person name="Macek B."/>
            <person name="Kumar C."/>
            <person name="Mortensen P."/>
            <person name="Mann M."/>
        </authorList>
    </citation>
    <scope>PHOSPHORYLATION [LARGE SCALE ANALYSIS] AT SER-791</scope>
    <scope>IDENTIFICATION BY MASS SPECTROMETRY [LARGE SCALE ANALYSIS]</scope>
    <source>
        <tissue>Cervix carcinoma</tissue>
    </source>
</reference>
<reference key="8">
    <citation type="journal article" date="2008" name="Proc. Natl. Acad. Sci. U.S.A.">
        <title>A quantitative atlas of mitotic phosphorylation.</title>
        <authorList>
            <person name="Dephoure N."/>
            <person name="Zhou C."/>
            <person name="Villen J."/>
            <person name="Beausoleil S.A."/>
            <person name="Bakalarski C.E."/>
            <person name="Elledge S.J."/>
            <person name="Gygi S.P."/>
        </authorList>
    </citation>
    <scope>PHOSPHORYLATION [LARGE SCALE ANALYSIS] AT SER-791</scope>
    <scope>IDENTIFICATION BY MASS SPECTROMETRY [LARGE SCALE ANALYSIS]</scope>
    <source>
        <tissue>Cervix carcinoma</tissue>
    </source>
</reference>
<reference key="9">
    <citation type="journal article" date="2010" name="J. Immunol.">
        <title>Junctional adhesion molecule-C is a soluble mediator of angiogenesis.</title>
        <authorList>
            <person name="Rabquer B.J."/>
            <person name="Amin M.A."/>
            <person name="Teegala N."/>
            <person name="Shaheen M.K."/>
            <person name="Tsou P.S."/>
            <person name="Ruth J.H."/>
            <person name="Lesch C.A."/>
            <person name="Imhof B.A."/>
            <person name="Koch A.E."/>
        </authorList>
    </citation>
    <scope>ROLE IN PROTEOLYTICAL RELEASE OF JAM3</scope>
</reference>
<reference key="10">
    <citation type="journal article" date="2010" name="Mol. Cell">
        <title>Direct activation of TACE-mediated ectodomain shedding by p38 MAP kinase regulates EGF receptor-dependent cell proliferation.</title>
        <authorList>
            <person name="Xu P."/>
            <person name="Derynck R."/>
        </authorList>
    </citation>
    <scope>PHOSPHORYLATION AT THR-735</scope>
    <scope>INTERACTION WITH MAPK14</scope>
</reference>
<reference key="11">
    <citation type="journal article" date="2010" name="Sci. Signal.">
        <title>Quantitative phosphoproteomics reveals widespread full phosphorylation site occupancy during mitosis.</title>
        <authorList>
            <person name="Olsen J.V."/>
            <person name="Vermeulen M."/>
            <person name="Santamaria A."/>
            <person name="Kumar C."/>
            <person name="Miller M.L."/>
            <person name="Jensen L.J."/>
            <person name="Gnad F."/>
            <person name="Cox J."/>
            <person name="Jensen T.S."/>
            <person name="Nigg E.A."/>
            <person name="Brunak S."/>
            <person name="Mann M."/>
        </authorList>
    </citation>
    <scope>PHOSPHORYLATION [LARGE SCALE ANALYSIS] AT SER-791</scope>
    <scope>IDENTIFICATION BY MASS SPECTROMETRY [LARGE SCALE ANALYSIS]</scope>
    <source>
        <tissue>Cervix carcinoma</tissue>
    </source>
</reference>
<reference key="12">
    <citation type="journal article" date="2011" name="N. Engl. J. Med.">
        <title>Inflammatory skin and bowel disease linked to ADAM17 deletion.</title>
        <authorList>
            <person name="Blaydon D.C."/>
            <person name="Biancheri P."/>
            <person name="Di W.L."/>
            <person name="Plagnol V."/>
            <person name="Cabral R.M."/>
            <person name="Brooke M.A."/>
            <person name="van Heel D.A."/>
            <person name="Ruschendorf F."/>
            <person name="Toynbee M."/>
            <person name="Walne A."/>
            <person name="O'Toole E.A."/>
            <person name="Martin J.E."/>
            <person name="Lindley K."/>
            <person name="Vulliamy T."/>
            <person name="Abrams D.J."/>
            <person name="MacDonald T.T."/>
            <person name="Harper J.I."/>
            <person name="Kelsell D.P."/>
        </authorList>
    </citation>
    <scope>INVOLVEMENT IN NISBD1</scope>
</reference>
<reference key="13">
    <citation type="journal article" date="2011" name="Sci. Signal.">
        <title>System-wide temporal characterization of the proteome and phosphoproteome of human embryonic stem cell differentiation.</title>
        <authorList>
            <person name="Rigbolt K.T."/>
            <person name="Prokhorova T.A."/>
            <person name="Akimov V."/>
            <person name="Henningsen J."/>
            <person name="Johansen P.T."/>
            <person name="Kratchmarova I."/>
            <person name="Kassem M."/>
            <person name="Mann M."/>
            <person name="Olsen J.V."/>
            <person name="Blagoev B."/>
        </authorList>
    </citation>
    <scope>PHOSPHORYLATION [LARGE SCALE ANALYSIS] AT SER-791</scope>
    <scope>IDENTIFICATION BY MASS SPECTROMETRY [LARGE SCALE ANALYSIS]</scope>
</reference>
<reference key="14">
    <citation type="journal article" date="2013" name="J. Proteome Res.">
        <title>Toward a comprehensive characterization of a human cancer cell phosphoproteome.</title>
        <authorList>
            <person name="Zhou H."/>
            <person name="Di Palma S."/>
            <person name="Preisinger C."/>
            <person name="Peng M."/>
            <person name="Polat A.N."/>
            <person name="Heck A.J."/>
            <person name="Mohammed S."/>
        </authorList>
    </citation>
    <scope>PHOSPHORYLATION [LARGE SCALE ANALYSIS] AT THR-761 AND SER-791</scope>
    <scope>IDENTIFICATION BY MASS SPECTROMETRY [LARGE SCALE ANALYSIS]</scope>
    <source>
        <tissue>Erythroleukemia</tissue>
    </source>
</reference>
<reference key="15">
    <citation type="journal article" date="2013" name="Nature">
        <title>The heterotaxy gene GALNT11 glycosylates Notch to orchestrate cilia type and laterality.</title>
        <authorList>
            <person name="Boskovski M.T."/>
            <person name="Yuan S."/>
            <person name="Pedersen N.B."/>
            <person name="Goth C.K."/>
            <person name="Makova S."/>
            <person name="Clausen H."/>
            <person name="Brueckner M."/>
            <person name="Khokha M.K."/>
        </authorList>
    </citation>
    <scope>FUNCTION</scope>
</reference>
<reference key="16">
    <citation type="journal article" date="2014" name="J. Immunol.">
        <title>ADAM17-mediated shedding of FcgammaRIIIA on human NK cells: identification of the cleavage site and relationship with activation.</title>
        <authorList>
            <person name="Lajoie L."/>
            <person name="Congy-Jolivet N."/>
            <person name="Bolzec A."/>
            <person name="Gouilleux-Gruart V."/>
            <person name="Sicard E."/>
            <person name="Sung H.C."/>
            <person name="Peiretti F."/>
            <person name="Moreau T."/>
            <person name="Vie H."/>
            <person name="Clemenceau B."/>
            <person name="Thibault G."/>
        </authorList>
    </citation>
    <scope>FUNCTION</scope>
    <scope>TISSUE SPECIFICITY</scope>
</reference>
<reference key="17">
    <citation type="journal article" date="2014" name="J. Proteomics">
        <title>An enzyme assisted RP-RPLC approach for in-depth analysis of human liver phosphoproteome.</title>
        <authorList>
            <person name="Bian Y."/>
            <person name="Song C."/>
            <person name="Cheng K."/>
            <person name="Dong M."/>
            <person name="Wang F."/>
            <person name="Huang J."/>
            <person name="Sun D."/>
            <person name="Wang L."/>
            <person name="Ye M."/>
            <person name="Zou H."/>
        </authorList>
    </citation>
    <scope>PHOSPHORYLATION [LARGE SCALE ANALYSIS] AT SER-791</scope>
    <scope>IDENTIFICATION BY MASS SPECTROMETRY [LARGE SCALE ANALYSIS]</scope>
    <source>
        <tissue>Liver</tissue>
    </source>
</reference>
<reference key="18">
    <citation type="journal article" date="2014" name="J. Virol.">
        <title>TMPRSS2 and ADAM17 cleave ACE2 differentially and only proteolysis by TMPRSS2 augments entry driven by the severe acute respiratory syndrome coronavirus spike protein.</title>
        <authorList>
            <person name="Heurich A."/>
            <person name="Hofmann-Winkler H."/>
            <person name="Gierer S."/>
            <person name="Liepold T."/>
            <person name="Jahn O."/>
            <person name="Poehlmann S."/>
        </authorList>
    </citation>
    <scope>FUNCTION</scope>
    <scope>CATALYTIC ACTIVITY</scope>
</reference>
<reference key="19">
    <citation type="journal article" date="2016" name="Cell Rep.">
        <title>Proteolytic Cleavage Governs Interleukin-11 Trans-signaling.</title>
        <authorList>
            <person name="Lokau J."/>
            <person name="Nitz R."/>
            <person name="Agthe M."/>
            <person name="Monhasery N."/>
            <person name="Aparicio-Siegmund S."/>
            <person name="Schumacher N."/>
            <person name="Wolf J."/>
            <person name="Moeller-Hackbarth K."/>
            <person name="Waetzig G.H."/>
            <person name="Groetzinger J."/>
            <person name="Mueller-Newen G."/>
            <person name="Rose-John S."/>
            <person name="Scheller J."/>
            <person name="Garbers C."/>
        </authorList>
    </citation>
    <scope>FUNCTION</scope>
</reference>
<reference key="20">
    <citation type="journal article" date="2017" name="Neurosci. Lett.">
        <title>ADAM17 is the main sheddase for the generation of human triggering receptor expressed in myeloid cells (hTREM2) ectodomain and cleaves TREM2 after Histidine 157.</title>
        <authorList>
            <person name="Feuerbach D."/>
            <person name="Schindler P."/>
            <person name="Barske C."/>
            <person name="Joller S."/>
            <person name="Beng-Louka E."/>
            <person name="Worringer K.A."/>
            <person name="Kommineni S."/>
            <person name="Kaykas A."/>
            <person name="Ho D.J."/>
            <person name="Ye C."/>
            <person name="Welzenbach K."/>
            <person name="Elain G."/>
            <person name="Klein L."/>
            <person name="Brzak I."/>
            <person name="Mir A.K."/>
            <person name="Farady C.J."/>
            <person name="Aichholz R."/>
            <person name="Popp S."/>
            <person name="George N."/>
            <person name="Neumann U."/>
        </authorList>
    </citation>
    <scope>FUNCTION</scope>
    <scope>CATALYTIC ACTIVITY</scope>
</reference>
<reference key="21">
    <citation type="journal article" date="2017" name="PLoS Biol.">
        <title>Proteolytic Origin of the Soluble Human IL-6R In Vivo and a Decisive Role of N-Glycosylation.</title>
        <authorList>
            <person name="Riethmueller S."/>
            <person name="Somasundaram P."/>
            <person name="Ehlers J.C."/>
            <person name="Hung C.W."/>
            <person name="Flynn C.M."/>
            <person name="Lokau J."/>
            <person name="Agthe M."/>
            <person name="Duesterhoeft S."/>
            <person name="Zhu Y."/>
            <person name="Groetzinger J."/>
            <person name="Lorenzen I."/>
            <person name="Koudelka T."/>
            <person name="Yamamoto K."/>
            <person name="Pickhinke U."/>
            <person name="Wichert R."/>
            <person name="Becker-Pauly C."/>
            <person name="Raedisch M."/>
            <person name="Albrecht A."/>
            <person name="Hessefort M."/>
            <person name="Stahnke D."/>
            <person name="Unverzagt C."/>
            <person name="Rose-John S."/>
            <person name="Tholey A."/>
            <person name="Garbers C."/>
        </authorList>
    </citation>
    <scope>FUNCTION</scope>
</reference>
<reference key="22">
    <citation type="journal article" date="2018" name="Elife">
        <title>iTAP, a novel iRhom interactor, controls TNF secretion by policing the stability of iRhom/TACE.</title>
        <authorList>
            <person name="Oikonomidi I."/>
            <person name="Burbridge E."/>
            <person name="Cavadas M."/>
            <person name="Sullivan G."/>
            <person name="Collis B."/>
            <person name="Naegele H."/>
            <person name="Clancy D."/>
            <person name="Brezinova J."/>
            <person name="Hu T."/>
            <person name="Bileck A."/>
            <person name="Gerner C."/>
            <person name="Bolado A."/>
            <person name="von Kriegsheim A."/>
            <person name="Martin S.J."/>
            <person name="Steinberg F."/>
            <person name="Strisovsky K."/>
            <person name="Adrain C."/>
        </authorList>
    </citation>
    <scope>INTERACTION WITH RHBDF1 AND RHBDF2</scope>
</reference>
<reference key="23">
    <citation type="journal article" date="2018" name="Elife">
        <title>FRMD8 promotes inflammatory and growth factor signalling by stabilising the iRhom/ADAM17 sheddase complex.</title>
        <authorList>
            <person name="Kuenzel U."/>
            <person name="Grieve A.G."/>
            <person name="Meng Y."/>
            <person name="Sieber B."/>
            <person name="Cowley S.A."/>
            <person name="Freeman M."/>
        </authorList>
    </citation>
    <scope>INTERACTION WITH FRMD8; RHBDF1 AND RHBDF2</scope>
</reference>
<reference key="24">
    <citation type="journal article" date="2022" name="Cells">
        <title>Tetraspanin 8 Subfamily Members Regulate Substrate-Specificity of a Disintegrin and Metalloprotease 17.</title>
        <authorList>
            <person name="Mueller M."/>
            <person name="Saunders C."/>
            <person name="Senftleben A."/>
            <person name="Heidbuechel J.P.W."/>
            <person name="Halwachs B."/>
            <person name="Bolik J."/>
            <person name="Hedemann N."/>
            <person name="Roeder C."/>
            <person name="Bauerschlag D."/>
            <person name="Rose-John S."/>
            <person name="Schmidt-Arras D."/>
        </authorList>
    </citation>
    <scope>FUNCTION</scope>
    <scope>INTERACTION WITH TSPAN8</scope>
    <scope>SUBCELLULAR LOCATION</scope>
</reference>
<reference key="25">
    <citation type="journal article" date="1998" name="Proc. Natl. Acad. Sci. U.S.A.">
        <title>Crystal structure of the catalytic domain of human tumor necrosis factor-alpha-converting enzyme.</title>
        <authorList>
            <person name="Maskos K."/>
            <person name="Fernandez-Catalan C."/>
            <person name="Huber R."/>
            <person name="Bourenkov G.P."/>
            <person name="Bartunik H."/>
            <person name="Ellestad G.A."/>
            <person name="Reddy P."/>
            <person name="Wolfson M.F."/>
            <person name="Rauch C.T."/>
            <person name="Castner B.J."/>
            <person name="Davis R."/>
            <person name="Clarke H.R.G."/>
            <person name="Petersen M."/>
            <person name="Fitzner J.N."/>
            <person name="Cerretti D.P."/>
            <person name="March C.J."/>
            <person name="Paxton R.J."/>
            <person name="Black R.A."/>
            <person name="Bode W."/>
        </authorList>
    </citation>
    <scope>X-RAY CRYSTALLOGRAPHY (2.0 ANGSTROMS) OF 219-473 IN COMPLEX WITH ZINC</scope>
    <scope>COFACTOR</scope>
    <scope>ACTIVE SITE</scope>
    <scope>DISULFIDE BONDS</scope>
</reference>
<organism>
    <name type="scientific">Homo sapiens</name>
    <name type="common">Human</name>
    <dbReference type="NCBI Taxonomy" id="9606"/>
    <lineage>
        <taxon>Eukaryota</taxon>
        <taxon>Metazoa</taxon>
        <taxon>Chordata</taxon>
        <taxon>Craniata</taxon>
        <taxon>Vertebrata</taxon>
        <taxon>Euteleostomi</taxon>
        <taxon>Mammalia</taxon>
        <taxon>Eutheria</taxon>
        <taxon>Euarchontoglires</taxon>
        <taxon>Primates</taxon>
        <taxon>Haplorrhini</taxon>
        <taxon>Catarrhini</taxon>
        <taxon>Hominidae</taxon>
        <taxon>Homo</taxon>
    </lineage>
</organism>
<protein>
    <recommendedName>
        <fullName>Disintegrin and metalloproteinase domain-containing protein 17</fullName>
        <shortName>ADAM 17</shortName>
        <ecNumber evidence="10 13 16 20">3.4.24.86</ecNumber>
    </recommendedName>
    <alternativeName>
        <fullName>Snake venom-like protease</fullName>
    </alternativeName>
    <alternativeName>
        <fullName>TNF-alpha convertase</fullName>
    </alternativeName>
    <alternativeName>
        <fullName>TNF-alpha-converting enzyme</fullName>
    </alternativeName>
    <cdAntigenName>CD156b</cdAntigenName>
</protein>